<evidence type="ECO:0000250" key="1"/>
<evidence type="ECO:0000256" key="2">
    <source>
        <dbReference type="SAM" id="MobiDB-lite"/>
    </source>
</evidence>
<evidence type="ECO:0000305" key="3"/>
<gene>
    <name type="primary">VG1-GAMMA</name>
</gene>
<organism>
    <name type="scientific">Ceratitis capitata</name>
    <name type="common">Mediterranean fruit fly</name>
    <name type="synonym">Tephritis capitata</name>
    <dbReference type="NCBI Taxonomy" id="7213"/>
    <lineage>
        <taxon>Eukaryota</taxon>
        <taxon>Metazoa</taxon>
        <taxon>Ecdysozoa</taxon>
        <taxon>Arthropoda</taxon>
        <taxon>Hexapoda</taxon>
        <taxon>Insecta</taxon>
        <taxon>Pterygota</taxon>
        <taxon>Neoptera</taxon>
        <taxon>Endopterygota</taxon>
        <taxon>Diptera</taxon>
        <taxon>Brachycera</taxon>
        <taxon>Muscomorpha</taxon>
        <taxon>Tephritoidea</taxon>
        <taxon>Tephritidae</taxon>
        <taxon>Ceratitis</taxon>
        <taxon>Ceratitis</taxon>
    </lineage>
</organism>
<accession>P27878</accession>
<proteinExistence type="evidence at transcript level"/>
<feature type="signal peptide" evidence="1">
    <location>
        <begin position="1"/>
        <end position="19"/>
    </location>
</feature>
<feature type="chain" id="PRO_0000017817" description="Vitellogenin-1">
    <location>
        <begin position="20"/>
        <end position="437"/>
    </location>
</feature>
<feature type="region of interest" description="Disordered" evidence="2">
    <location>
        <begin position="161"/>
        <end position="194"/>
    </location>
</feature>
<feature type="region of interest" description="Disordered" evidence="2">
    <location>
        <begin position="405"/>
        <end position="437"/>
    </location>
</feature>
<feature type="compositionally biased region" description="Polar residues" evidence="2">
    <location>
        <begin position="174"/>
        <end position="184"/>
    </location>
</feature>
<feature type="compositionally biased region" description="Polar residues" evidence="2">
    <location>
        <begin position="427"/>
        <end position="437"/>
    </location>
</feature>
<comment type="function">
    <text>Vitellogenin is the major yolk protein of eggs where it is used as a food source during embryogenesis.</text>
</comment>
<comment type="subcellular location">
    <subcellularLocation>
        <location>Secreted</location>
    </subcellularLocation>
</comment>
<comment type="tissue specificity">
    <text>Synthesized in the fat body and ovarian follicle cells and accumulate in the oocyte.</text>
</comment>
<comment type="induction">
    <text>By beta-ecdysone; in males.</text>
</comment>
<comment type="similarity">
    <text evidence="3">Belongs to the AB hydrolase superfamily. Lipase family.</text>
</comment>
<protein>
    <recommendedName>
        <fullName>Vitellogenin-1</fullName>
    </recommendedName>
    <alternativeName>
        <fullName>Vitellogenin I</fullName>
    </alternativeName>
    <alternativeName>
        <fullName>Yolk protein 1</fullName>
    </alternativeName>
</protein>
<sequence>MNPLKIFCFLALVIAVASANKHGKNKDNAGPNSLKPTDWLSVEELQSMTAIDDITLQQLENMSVEDAERKIEKIYHLSQINHALEPSYVPSPSNVPVMLMKPNGQSQQTNHNELVEAAKQQPNFGDEEVTIFITGMPQTSSAVLKANKKLVQAYMQRYNGQQQPINGNKDYDYGSSQGNQGATSSEEDYSESWKNQKSTKGNLVIINLGSTLTNMKRFALLDVEQTGNMIGKTLVQLTNEVDVPQEIIHIVAQCIGAQVAGAAGRQYKRLTGHQLRRITALDPSKIFAKNRNALTGLARGDADFVDAIHTSTCGMGTRQRVGDVDFYVNGPASTAPGTNNVVEASMRATRYFAESLRPGNERNFPAVAANSLNQYENNEGNGKRAYMGIATDFDLEGDYILKVNPKSPFGKSAPAQKQRRYHGLHQSWKSGKNQNQE</sequence>
<keyword id="KW-0964">Secreted</keyword>
<keyword id="KW-0732">Signal</keyword>
<name>VIT1_CERCA</name>
<dbReference type="EMBL" id="X54661">
    <property type="protein sequence ID" value="CAA38472.1"/>
    <property type="molecule type" value="Genomic_DNA"/>
</dbReference>
<dbReference type="PIR" id="S22889">
    <property type="entry name" value="S22889"/>
</dbReference>
<dbReference type="SMR" id="P27878"/>
<dbReference type="ESTHER" id="cerca-1vite">
    <property type="family name" value="Yolk-Protein_dipter"/>
</dbReference>
<dbReference type="OrthoDB" id="6770740at2759"/>
<dbReference type="GO" id="GO:0005615">
    <property type="term" value="C:extracellular space"/>
    <property type="evidence" value="ECO:0007669"/>
    <property type="project" value="TreeGrafter"/>
</dbReference>
<dbReference type="GO" id="GO:0016298">
    <property type="term" value="F:lipase activity"/>
    <property type="evidence" value="ECO:0007669"/>
    <property type="project" value="InterPro"/>
</dbReference>
<dbReference type="GO" id="GO:0017171">
    <property type="term" value="F:serine hydrolase activity"/>
    <property type="evidence" value="ECO:0007669"/>
    <property type="project" value="TreeGrafter"/>
</dbReference>
<dbReference type="GO" id="GO:0016042">
    <property type="term" value="P:lipid catabolic process"/>
    <property type="evidence" value="ECO:0007669"/>
    <property type="project" value="TreeGrafter"/>
</dbReference>
<dbReference type="Gene3D" id="3.40.50.1820">
    <property type="entry name" value="alpha/beta hydrolase"/>
    <property type="match status" value="1"/>
</dbReference>
<dbReference type="InterPro" id="IPR029058">
    <property type="entry name" value="AB_hydrolase_fold"/>
</dbReference>
<dbReference type="InterPro" id="IPR013818">
    <property type="entry name" value="Lipase"/>
</dbReference>
<dbReference type="InterPro" id="IPR000734">
    <property type="entry name" value="TAG_lipase"/>
</dbReference>
<dbReference type="PANTHER" id="PTHR11610:SF149">
    <property type="entry name" value="FI01450P-RELATED"/>
    <property type="match status" value="1"/>
</dbReference>
<dbReference type="PANTHER" id="PTHR11610">
    <property type="entry name" value="LIPASE"/>
    <property type="match status" value="1"/>
</dbReference>
<dbReference type="Pfam" id="PF00151">
    <property type="entry name" value="Lipase"/>
    <property type="match status" value="1"/>
</dbReference>
<dbReference type="SUPFAM" id="SSF53474">
    <property type="entry name" value="alpha/beta-Hydrolases"/>
    <property type="match status" value="1"/>
</dbReference>
<reference key="1">
    <citation type="journal article" date="1991" name="Genetics">
        <title>A cluster of vitellogenin genes in the Mediterranean fruit fly Ceratitis capitata: sequence and structural conservation in dipteran yolk proteins and their genes.</title>
        <authorList>
            <person name="Rina M."/>
            <person name="Savakis C."/>
        </authorList>
    </citation>
    <scope>NUCLEOTIDE SEQUENCE [GENOMIC DNA]</scope>
    <source>
        <strain>Benakeion</strain>
    </source>
</reference>